<protein>
    <recommendedName>
        <fullName>Arginine--tRNA ligase, cytoplasmic</fullName>
        <ecNumber evidence="1">6.1.1.19</ecNumber>
    </recommendedName>
    <alternativeName>
        <fullName>Arginyl-tRNA synthetase</fullName>
        <shortName evidence="1">ArgRS</shortName>
    </alternativeName>
</protein>
<proteinExistence type="evidence at transcript level"/>
<feature type="chain" id="PRO_0000395433" description="Arginine--tRNA ligase, cytoplasmic">
    <location>
        <begin position="1"/>
        <end position="660"/>
    </location>
</feature>
<feature type="region of interest" description="Could be involved in the assembly of the multisynthetase complex" evidence="1">
    <location>
        <begin position="1"/>
        <end position="72"/>
    </location>
</feature>
<feature type="region of interest" description="Interaction with tRNA" evidence="2">
    <location>
        <begin position="529"/>
        <end position="543"/>
    </location>
</feature>
<feature type="short sequence motif" description="'HIGH' region" evidence="1">
    <location>
        <begin position="201"/>
        <end position="212"/>
    </location>
</feature>
<feature type="binding site" evidence="1">
    <location>
        <begin position="200"/>
        <end position="202"/>
    </location>
    <ligand>
        <name>L-arginine</name>
        <dbReference type="ChEBI" id="CHEBI:32682"/>
    </ligand>
</feature>
<feature type="binding site" evidence="1">
    <location>
        <position position="211"/>
    </location>
    <ligand>
        <name>L-arginine</name>
        <dbReference type="ChEBI" id="CHEBI:32682"/>
    </ligand>
</feature>
<feature type="binding site" evidence="1">
    <location>
        <position position="384"/>
    </location>
    <ligand>
        <name>L-arginine</name>
        <dbReference type="ChEBI" id="CHEBI:32682"/>
    </ligand>
</feature>
<feature type="binding site" evidence="1">
    <location>
        <position position="388"/>
    </location>
    <ligand>
        <name>L-arginine</name>
        <dbReference type="ChEBI" id="CHEBI:32682"/>
    </ligand>
</feature>
<feature type="binding site" evidence="1">
    <location>
        <position position="412"/>
    </location>
    <ligand>
        <name>L-arginine</name>
        <dbReference type="ChEBI" id="CHEBI:32682"/>
    </ligand>
</feature>
<feature type="modified residue" description="N-acetylmethionine" evidence="1">
    <location>
        <position position="1"/>
    </location>
</feature>
<reference evidence="4" key="1">
    <citation type="submission" date="2007-03" db="EMBL/GenBank/DDBJ databases">
        <authorList>
            <consortium name="NIH - Mammalian Gene Collection (MGC) project"/>
        </authorList>
    </citation>
    <scope>NUCLEOTIDE SEQUENCE [LARGE SCALE MRNA]</scope>
    <source>
        <strain evidence="4">Hereford</strain>
        <tissue evidence="4">Thymus</tissue>
    </source>
</reference>
<organism>
    <name type="scientific">Bos taurus</name>
    <name type="common">Bovine</name>
    <dbReference type="NCBI Taxonomy" id="9913"/>
    <lineage>
        <taxon>Eukaryota</taxon>
        <taxon>Metazoa</taxon>
        <taxon>Chordata</taxon>
        <taxon>Craniata</taxon>
        <taxon>Vertebrata</taxon>
        <taxon>Euteleostomi</taxon>
        <taxon>Mammalia</taxon>
        <taxon>Eutheria</taxon>
        <taxon>Laurasiatheria</taxon>
        <taxon>Artiodactyla</taxon>
        <taxon>Ruminantia</taxon>
        <taxon>Pecora</taxon>
        <taxon>Bovidae</taxon>
        <taxon>Bovinae</taxon>
        <taxon>Bos</taxon>
    </lineage>
</organism>
<dbReference type="EC" id="6.1.1.19" evidence="1"/>
<dbReference type="EMBL" id="BC134468">
    <property type="protein sequence ID" value="AAI34469.1"/>
    <property type="molecule type" value="mRNA"/>
</dbReference>
<dbReference type="RefSeq" id="NP_001098808.1">
    <property type="nucleotide sequence ID" value="NM_001105338.2"/>
</dbReference>
<dbReference type="SMR" id="A7YW98"/>
<dbReference type="FunCoup" id="A7YW98">
    <property type="interactions" value="3014"/>
</dbReference>
<dbReference type="STRING" id="9913.ENSBTAP00000019475"/>
<dbReference type="PaxDb" id="9913-ENSBTAP00000019475"/>
<dbReference type="PeptideAtlas" id="A7YW98"/>
<dbReference type="Ensembl" id="ENSBTAT00000090813.1">
    <property type="protein sequence ID" value="ENSBTAP00000099185.1"/>
    <property type="gene ID" value="ENSBTAG00000014626.5"/>
</dbReference>
<dbReference type="GeneID" id="506305"/>
<dbReference type="KEGG" id="bta:506305"/>
<dbReference type="CTD" id="5917"/>
<dbReference type="VEuPathDB" id="HostDB:ENSBTAG00000014626"/>
<dbReference type="VGNC" id="VGNC:33733">
    <property type="gene designation" value="RARS1"/>
</dbReference>
<dbReference type="eggNOG" id="KOG4426">
    <property type="taxonomic scope" value="Eukaryota"/>
</dbReference>
<dbReference type="GeneTree" id="ENSGT00530000063407"/>
<dbReference type="HOGENOM" id="CLU_006406_5_1_1"/>
<dbReference type="InParanoid" id="A7YW98"/>
<dbReference type="OMA" id="NKPLHLG"/>
<dbReference type="OrthoDB" id="68056at2759"/>
<dbReference type="TreeFam" id="TF106111"/>
<dbReference type="Reactome" id="R-BTA-9856649">
    <property type="pathway name" value="Transcriptional and post-translational regulation of MITF-M expression and activity"/>
</dbReference>
<dbReference type="Proteomes" id="UP000009136">
    <property type="component" value="Chromosome 7"/>
</dbReference>
<dbReference type="Bgee" id="ENSBTAG00000014626">
    <property type="expression patterns" value="Expressed in oocyte and 105 other cell types or tissues"/>
</dbReference>
<dbReference type="GO" id="GO:0017101">
    <property type="term" value="C:aminoacyl-tRNA synthetase multienzyme complex"/>
    <property type="evidence" value="ECO:0000250"/>
    <property type="project" value="UniProtKB"/>
</dbReference>
<dbReference type="GO" id="GO:0005829">
    <property type="term" value="C:cytosol"/>
    <property type="evidence" value="ECO:0000250"/>
    <property type="project" value="UniProtKB"/>
</dbReference>
<dbReference type="GO" id="GO:0004814">
    <property type="term" value="F:arginine-tRNA ligase activity"/>
    <property type="evidence" value="ECO:0000250"/>
    <property type="project" value="UniProtKB"/>
</dbReference>
<dbReference type="GO" id="GO:0005524">
    <property type="term" value="F:ATP binding"/>
    <property type="evidence" value="ECO:0007669"/>
    <property type="project" value="UniProtKB-KW"/>
</dbReference>
<dbReference type="GO" id="GO:0006420">
    <property type="term" value="P:arginyl-tRNA aminoacylation"/>
    <property type="evidence" value="ECO:0000250"/>
    <property type="project" value="UniProtKB"/>
</dbReference>
<dbReference type="CDD" id="cd00671">
    <property type="entry name" value="ArgRS_core"/>
    <property type="match status" value="1"/>
</dbReference>
<dbReference type="FunFam" id="1.10.730.10:FF:000016">
    <property type="entry name" value="Arginine--tRNA ligase, cytoplasmic"/>
    <property type="match status" value="1"/>
</dbReference>
<dbReference type="FunFam" id="3.30.1360.70:FF:000002">
    <property type="entry name" value="arginine--tRNA ligase, cytoplasmic"/>
    <property type="match status" value="1"/>
</dbReference>
<dbReference type="FunFam" id="3.40.50.620:FF:000084">
    <property type="entry name" value="arginine--tRNA ligase, cytoplasmic"/>
    <property type="match status" value="1"/>
</dbReference>
<dbReference type="Gene3D" id="3.30.1360.70">
    <property type="entry name" value="Arginyl tRNA synthetase N-terminal domain"/>
    <property type="match status" value="1"/>
</dbReference>
<dbReference type="Gene3D" id="3.40.50.620">
    <property type="entry name" value="HUPs"/>
    <property type="match status" value="1"/>
</dbReference>
<dbReference type="Gene3D" id="1.10.730.10">
    <property type="entry name" value="Isoleucyl-tRNA Synthetase, Domain 1"/>
    <property type="match status" value="1"/>
</dbReference>
<dbReference type="HAMAP" id="MF_00123">
    <property type="entry name" value="Arg_tRNA_synth"/>
    <property type="match status" value="1"/>
</dbReference>
<dbReference type="InterPro" id="IPR001412">
    <property type="entry name" value="aa-tRNA-synth_I_CS"/>
</dbReference>
<dbReference type="InterPro" id="IPR001278">
    <property type="entry name" value="Arg-tRNA-ligase"/>
</dbReference>
<dbReference type="InterPro" id="IPR005148">
    <property type="entry name" value="Arg-tRNA-synth_N"/>
</dbReference>
<dbReference type="InterPro" id="IPR036695">
    <property type="entry name" value="Arg-tRNA-synth_N_sf"/>
</dbReference>
<dbReference type="InterPro" id="IPR035684">
    <property type="entry name" value="ArgRS_core"/>
</dbReference>
<dbReference type="InterPro" id="IPR008909">
    <property type="entry name" value="DALR_anticod-bd"/>
</dbReference>
<dbReference type="InterPro" id="IPR014729">
    <property type="entry name" value="Rossmann-like_a/b/a_fold"/>
</dbReference>
<dbReference type="InterPro" id="IPR009080">
    <property type="entry name" value="tRNAsynth_Ia_anticodon-bd"/>
</dbReference>
<dbReference type="NCBIfam" id="TIGR00456">
    <property type="entry name" value="argS"/>
    <property type="match status" value="1"/>
</dbReference>
<dbReference type="PANTHER" id="PTHR11956:SF5">
    <property type="entry name" value="ARGININE--TRNA LIGASE, CYTOPLASMIC"/>
    <property type="match status" value="1"/>
</dbReference>
<dbReference type="PANTHER" id="PTHR11956">
    <property type="entry name" value="ARGINYL-TRNA SYNTHETASE"/>
    <property type="match status" value="1"/>
</dbReference>
<dbReference type="Pfam" id="PF03485">
    <property type="entry name" value="Arg_tRNA_synt_N"/>
    <property type="match status" value="1"/>
</dbReference>
<dbReference type="Pfam" id="PF05746">
    <property type="entry name" value="DALR_1"/>
    <property type="match status" value="1"/>
</dbReference>
<dbReference type="Pfam" id="PF00750">
    <property type="entry name" value="tRNA-synt_1d"/>
    <property type="match status" value="1"/>
</dbReference>
<dbReference type="PRINTS" id="PR01038">
    <property type="entry name" value="TRNASYNTHARG"/>
</dbReference>
<dbReference type="SMART" id="SM01016">
    <property type="entry name" value="Arg_tRNA_synt_N"/>
    <property type="match status" value="1"/>
</dbReference>
<dbReference type="SMART" id="SM00836">
    <property type="entry name" value="DALR_1"/>
    <property type="match status" value="1"/>
</dbReference>
<dbReference type="SUPFAM" id="SSF47323">
    <property type="entry name" value="Anticodon-binding domain of a subclass of class I aminoacyl-tRNA synthetases"/>
    <property type="match status" value="1"/>
</dbReference>
<dbReference type="SUPFAM" id="SSF55190">
    <property type="entry name" value="Arginyl-tRNA synthetase (ArgRS), N-terminal 'additional' domain"/>
    <property type="match status" value="1"/>
</dbReference>
<dbReference type="SUPFAM" id="SSF52374">
    <property type="entry name" value="Nucleotidylyl transferase"/>
    <property type="match status" value="1"/>
</dbReference>
<dbReference type="PROSITE" id="PS00178">
    <property type="entry name" value="AA_TRNA_LIGASE_I"/>
    <property type="match status" value="1"/>
</dbReference>
<keyword id="KW-0007">Acetylation</keyword>
<keyword id="KW-0030">Aminoacyl-tRNA synthetase</keyword>
<keyword id="KW-0067">ATP-binding</keyword>
<keyword id="KW-0963">Cytoplasm</keyword>
<keyword id="KW-0436">Ligase</keyword>
<keyword id="KW-0547">Nucleotide-binding</keyword>
<keyword id="KW-0648">Protein biosynthesis</keyword>
<keyword id="KW-1185">Reference proteome</keyword>
<gene>
    <name type="primary">RARS1</name>
    <name evidence="4" type="synonym">RARS</name>
</gene>
<name>SYRC_BOVIN</name>
<comment type="function">
    <text evidence="1">Forms part of a macromolecular complex that catalyzes the attachment of specific amino acids to cognate tRNAs during protein synthesis. Modulates the secretion of AIMP1 and may be involved in generation of the inflammatory cytokine EMAP2 from AIMP1.</text>
</comment>
<comment type="catalytic activity">
    <reaction evidence="1">
        <text>tRNA(Arg) + L-arginine + ATP = L-arginyl-tRNA(Arg) + AMP + diphosphate</text>
        <dbReference type="Rhea" id="RHEA:20301"/>
        <dbReference type="Rhea" id="RHEA-COMP:9658"/>
        <dbReference type="Rhea" id="RHEA-COMP:9673"/>
        <dbReference type="ChEBI" id="CHEBI:30616"/>
        <dbReference type="ChEBI" id="CHEBI:32682"/>
        <dbReference type="ChEBI" id="CHEBI:33019"/>
        <dbReference type="ChEBI" id="CHEBI:78442"/>
        <dbReference type="ChEBI" id="CHEBI:78513"/>
        <dbReference type="ChEBI" id="CHEBI:456215"/>
        <dbReference type="EC" id="6.1.1.19"/>
    </reaction>
</comment>
<comment type="subunit">
    <text evidence="1">Interacts (via N-terminus) with AIMP1 (via N-terminus); this stimulates its catalytic activity. Interacts (via N-terminus) with LARS2 (via C-terminus). Monomer. Part of a multisubunit complex that groups tRNA ligases for Arg (RARS1), Asp (DARS1), Gln (QARS1), Ile (IARS1), Leu (LARS1), Lys (KARS1), Met (MARS1) the bifunctional ligase for Glu and Pro (EPRS1) and the auxiliary subunits AIMP1/p43, AIMP2/p38 and EEF1E1/p18. Interacts with QARS1. Part of a complex composed of RARS1, QARS1 and AIMP1.</text>
</comment>
<comment type="subcellular location">
    <subcellularLocation>
        <location evidence="1">Cytoplasm</location>
    </subcellularLocation>
    <subcellularLocation>
        <location evidence="1">Cytoplasm</location>
        <location evidence="1">Cytosol</location>
    </subcellularLocation>
</comment>
<comment type="domain">
    <text evidence="1">The alpha-helical N-terminus (residues 1-72) mediates interaction with AIMP1 and thereby contributes to the assembly of the multisynthetase complex.</text>
</comment>
<comment type="similarity">
    <text evidence="3">Belongs to the class-I aminoacyl-tRNA synthetase family.</text>
</comment>
<evidence type="ECO:0000250" key="1">
    <source>
        <dbReference type="UniProtKB" id="P54136"/>
    </source>
</evidence>
<evidence type="ECO:0000250" key="2">
    <source>
        <dbReference type="UniProtKB" id="Q05506"/>
    </source>
</evidence>
<evidence type="ECO:0000255" key="3"/>
<evidence type="ECO:0000312" key="4">
    <source>
        <dbReference type="EMBL" id="AAI34469.1"/>
    </source>
</evidence>
<sequence length="660" mass="75561">MDALVAHCSARLLQQEKEIKFLTAEVDRLKNYSCSEASADLEKLREENLKLKYRLNILRKSLQAERNKPTKTMININSCLEEVFGCAIKAAYPVLENPPLIVTPSQQPKFGDYQCNSAMGICQMLKTKEQKVNPREIAENIVKHLPDNEYIEKVEIAGPGFINIHLRKGFVSQQLTNLLVNGVKIPSIGENKKVIVDFSSPNIAKEMHVGHLRSTIIGESMCRLFEFAGYNVLRLNHVGDWGTQFGMLIAHLQDKFPDYLTVSPPIGDLQAFYKESKKRFDTEEEFKKRAYQCVVLLQSKNPDIIKAWKLICDVSRQEFNKIYEALDISLIERGESFYQDRMHDIVKEFEDRGFVQVDDGRKIVFVPGCSVPLTIVKSDGGYTYDTSDLAAIKQRLFEEKADMIIYVVDNGQSLHFQTVFGAAQMIGWYDPAVTRVSHAGFGVVLGEDKKKFKTRSGETVRLIDLLEEGLKRSMDKLKEKERDKVLTTEELKAAQTSVAYGCIKYADLSHNRLNDYIFSFDKMLDDRGNTAAYLLYAFTRIRSIARLANIDEEMLRKAAHETEIILDHEKEWKLGRCILRFPEVLQKILDDLLLHTLCDYIYELATTFTEFYDSCYCVEKDRQSGEVLKVNMWRMLLCEAVAAVMAKGFDILGIKPVQRM</sequence>
<accession>A7YW98</accession>